<proteinExistence type="inferred from homology"/>
<sequence length="353" mass="38937">MTAILERRESESLWGRFCNWITSTENRLYIGWFGVLMIPTLLTATSVFIIAFIAAPPVDIDGIREPVSGSLLYGNNIISGAIIPTSAAIGLHFYPIWEAASVDEWLYNGGPYELIVLHFLLGVACYMGREWELSFRLGMRPWIAVAYSAPVAAATAVFLIYPIGQGSFSDGMPLGISGTFNFMIVFQAEHNILMHPFHMLGVAGVFGGSLFSAMHGSLVTSSLIRETTENESANEGYRFGQEEETYNIVAAHGYFGRLIFQYASFNNSRSLHFFLAAWPVVGIWFTALGISTMAFNLNGFNFNQSVVDSQGRVINTWADIINRANLGMEVMHERNAHNFPLDLAAVEAPSTNG</sequence>
<evidence type="ECO:0000250" key="1">
    <source>
        <dbReference type="UniProtKB" id="P83755"/>
    </source>
</evidence>
<evidence type="ECO:0000255" key="2">
    <source>
        <dbReference type="HAMAP-Rule" id="MF_01379"/>
    </source>
</evidence>
<name>PSBA_NASOF</name>
<gene>
    <name evidence="2" type="primary">psbA</name>
</gene>
<geneLocation type="chloroplast"/>
<protein>
    <recommendedName>
        <fullName evidence="2">Photosystem II protein D1</fullName>
        <shortName evidence="2">PSII D1 protein</shortName>
        <ecNumber evidence="2">1.10.3.9</ecNumber>
    </recommendedName>
    <alternativeName>
        <fullName evidence="2">Photosystem II Q(B) protein</fullName>
    </alternativeName>
</protein>
<accession>A4QLR3</accession>
<dbReference type="EC" id="1.10.3.9" evidence="2"/>
<dbReference type="EMBL" id="AP009376">
    <property type="protein sequence ID" value="BAF50618.1"/>
    <property type="molecule type" value="Genomic_DNA"/>
</dbReference>
<dbReference type="RefSeq" id="YP_001123794.1">
    <property type="nucleotide sequence ID" value="NC_009275.1"/>
</dbReference>
<dbReference type="SMR" id="A4QLR3"/>
<dbReference type="GeneID" id="4962106"/>
<dbReference type="GO" id="GO:0009535">
    <property type="term" value="C:chloroplast thylakoid membrane"/>
    <property type="evidence" value="ECO:0007669"/>
    <property type="project" value="UniProtKB-SubCell"/>
</dbReference>
<dbReference type="GO" id="GO:0009523">
    <property type="term" value="C:photosystem II"/>
    <property type="evidence" value="ECO:0007669"/>
    <property type="project" value="UniProtKB-KW"/>
</dbReference>
<dbReference type="GO" id="GO:0016168">
    <property type="term" value="F:chlorophyll binding"/>
    <property type="evidence" value="ECO:0007669"/>
    <property type="project" value="UniProtKB-UniRule"/>
</dbReference>
<dbReference type="GO" id="GO:0045156">
    <property type="term" value="F:electron transporter, transferring electrons within the cyclic electron transport pathway of photosynthesis activity"/>
    <property type="evidence" value="ECO:0007669"/>
    <property type="project" value="InterPro"/>
</dbReference>
<dbReference type="GO" id="GO:0005506">
    <property type="term" value="F:iron ion binding"/>
    <property type="evidence" value="ECO:0007669"/>
    <property type="project" value="UniProtKB-UniRule"/>
</dbReference>
<dbReference type="GO" id="GO:0016682">
    <property type="term" value="F:oxidoreductase activity, acting on diphenols and related substances as donors, oxygen as acceptor"/>
    <property type="evidence" value="ECO:0007669"/>
    <property type="project" value="UniProtKB-UniRule"/>
</dbReference>
<dbReference type="GO" id="GO:0010242">
    <property type="term" value="F:oxygen evolving activity"/>
    <property type="evidence" value="ECO:0007669"/>
    <property type="project" value="UniProtKB-EC"/>
</dbReference>
<dbReference type="GO" id="GO:0009772">
    <property type="term" value="P:photosynthetic electron transport in photosystem II"/>
    <property type="evidence" value="ECO:0007669"/>
    <property type="project" value="InterPro"/>
</dbReference>
<dbReference type="GO" id="GO:0009635">
    <property type="term" value="P:response to herbicide"/>
    <property type="evidence" value="ECO:0007669"/>
    <property type="project" value="UniProtKB-KW"/>
</dbReference>
<dbReference type="CDD" id="cd09289">
    <property type="entry name" value="Photosystem-II_D1"/>
    <property type="match status" value="1"/>
</dbReference>
<dbReference type="FunFam" id="1.20.85.10:FF:000002">
    <property type="entry name" value="Photosystem II protein D1"/>
    <property type="match status" value="1"/>
</dbReference>
<dbReference type="Gene3D" id="1.20.85.10">
    <property type="entry name" value="Photosystem II protein D1-like"/>
    <property type="match status" value="1"/>
</dbReference>
<dbReference type="HAMAP" id="MF_01379">
    <property type="entry name" value="PSII_PsbA_D1"/>
    <property type="match status" value="1"/>
</dbReference>
<dbReference type="InterPro" id="IPR055266">
    <property type="entry name" value="D1/D2"/>
</dbReference>
<dbReference type="InterPro" id="IPR036854">
    <property type="entry name" value="Photo_II_D1/D2_sf"/>
</dbReference>
<dbReference type="InterPro" id="IPR000484">
    <property type="entry name" value="Photo_RC_L/M"/>
</dbReference>
<dbReference type="InterPro" id="IPR055265">
    <property type="entry name" value="Photo_RC_L/M_CS"/>
</dbReference>
<dbReference type="InterPro" id="IPR005867">
    <property type="entry name" value="PSII_D1"/>
</dbReference>
<dbReference type="NCBIfam" id="TIGR01151">
    <property type="entry name" value="psbA"/>
    <property type="match status" value="1"/>
</dbReference>
<dbReference type="PANTHER" id="PTHR33149:SF12">
    <property type="entry name" value="PHOTOSYSTEM II D2 PROTEIN"/>
    <property type="match status" value="1"/>
</dbReference>
<dbReference type="PANTHER" id="PTHR33149">
    <property type="entry name" value="PHOTOSYSTEM II PROTEIN D1"/>
    <property type="match status" value="1"/>
</dbReference>
<dbReference type="Pfam" id="PF00124">
    <property type="entry name" value="Photo_RC"/>
    <property type="match status" value="1"/>
</dbReference>
<dbReference type="PRINTS" id="PR00256">
    <property type="entry name" value="REACTNCENTRE"/>
</dbReference>
<dbReference type="SUPFAM" id="SSF81483">
    <property type="entry name" value="Bacterial photosystem II reaction centre, L and M subunits"/>
    <property type="match status" value="1"/>
</dbReference>
<dbReference type="PROSITE" id="PS00244">
    <property type="entry name" value="REACTION_CENTER"/>
    <property type="match status" value="1"/>
</dbReference>
<organism>
    <name type="scientific">Nasturtium officinale</name>
    <name type="common">Watercress</name>
    <name type="synonym">Rorippa nasturtium-aquaticum</name>
    <dbReference type="NCBI Taxonomy" id="65948"/>
    <lineage>
        <taxon>Eukaryota</taxon>
        <taxon>Viridiplantae</taxon>
        <taxon>Streptophyta</taxon>
        <taxon>Embryophyta</taxon>
        <taxon>Tracheophyta</taxon>
        <taxon>Spermatophyta</taxon>
        <taxon>Magnoliopsida</taxon>
        <taxon>eudicotyledons</taxon>
        <taxon>Gunneridae</taxon>
        <taxon>Pentapetalae</taxon>
        <taxon>rosids</taxon>
        <taxon>malvids</taxon>
        <taxon>Brassicales</taxon>
        <taxon>Brassicaceae</taxon>
        <taxon>Cardamineae</taxon>
        <taxon>Nasturtium</taxon>
    </lineage>
</organism>
<keyword id="KW-0007">Acetylation</keyword>
<keyword id="KW-0106">Calcium</keyword>
<keyword id="KW-0148">Chlorophyll</keyword>
<keyword id="KW-0150">Chloroplast</keyword>
<keyword id="KW-0157">Chromophore</keyword>
<keyword id="KW-0249">Electron transport</keyword>
<keyword id="KW-0359">Herbicide resistance</keyword>
<keyword id="KW-0408">Iron</keyword>
<keyword id="KW-0460">Magnesium</keyword>
<keyword id="KW-0464">Manganese</keyword>
<keyword id="KW-0472">Membrane</keyword>
<keyword id="KW-0479">Metal-binding</keyword>
<keyword id="KW-0560">Oxidoreductase</keyword>
<keyword id="KW-0597">Phosphoprotein</keyword>
<keyword id="KW-0602">Photosynthesis</keyword>
<keyword id="KW-0604">Photosystem II</keyword>
<keyword id="KW-0934">Plastid</keyword>
<keyword id="KW-0793">Thylakoid</keyword>
<keyword id="KW-0812">Transmembrane</keyword>
<keyword id="KW-1133">Transmembrane helix</keyword>
<keyword id="KW-0813">Transport</keyword>
<comment type="function">
    <text evidence="2">Photosystem II (PSII) is a light-driven water:plastoquinone oxidoreductase that uses light energy to abstract electrons from H(2)O, generating O(2) and a proton gradient subsequently used for ATP formation. It consists of a core antenna complex that captures photons, and an electron transfer chain that converts photonic excitation into a charge separation. The D1/D2 (PsbA/PsbD) reaction center heterodimer binds P680, the primary electron donor of PSII as well as several subsequent electron acceptors.</text>
</comment>
<comment type="catalytic activity">
    <reaction evidence="2">
        <text>2 a plastoquinone + 4 hnu + 2 H2O = 2 a plastoquinol + O2</text>
        <dbReference type="Rhea" id="RHEA:36359"/>
        <dbReference type="Rhea" id="RHEA-COMP:9561"/>
        <dbReference type="Rhea" id="RHEA-COMP:9562"/>
        <dbReference type="ChEBI" id="CHEBI:15377"/>
        <dbReference type="ChEBI" id="CHEBI:15379"/>
        <dbReference type="ChEBI" id="CHEBI:17757"/>
        <dbReference type="ChEBI" id="CHEBI:30212"/>
        <dbReference type="ChEBI" id="CHEBI:62192"/>
        <dbReference type="EC" id="1.10.3.9"/>
    </reaction>
</comment>
<comment type="cofactor">
    <text evidence="2">The D1/D2 heterodimer binds P680, chlorophylls that are the primary electron donor of PSII, and subsequent electron acceptors. It shares a non-heme iron and each subunit binds pheophytin, quinone, additional chlorophylls, carotenoids and lipids. D1 provides most of the ligands for the Mn4-Ca-O5 cluster of the oxygen-evolving complex (OEC). There is also a Cl(-1) ion associated with D1 and D2, which is required for oxygen evolution. The PSII complex binds additional chlorophylls, carotenoids and specific lipids.</text>
</comment>
<comment type="subunit">
    <text evidence="2">PSII is composed of 1 copy each of membrane proteins PsbA, PsbB, PsbC, PsbD, PsbE, PsbF, PsbH, PsbI, PsbJ, PsbK, PsbL, PsbM, PsbT, PsbX, PsbY, PsbZ, Psb30/Ycf12, at least 3 peripheral proteins of the oxygen-evolving complex and a large number of cofactors. It forms dimeric complexes.</text>
</comment>
<comment type="subcellular location">
    <subcellularLocation>
        <location evidence="2">Plastid</location>
        <location evidence="2">Chloroplast thylakoid membrane</location>
        <topology evidence="2">Multi-pass membrane protein</topology>
    </subcellularLocation>
</comment>
<comment type="PTM">
    <text evidence="2">Tyr-161 forms a radical intermediate that is referred to as redox-active TyrZ, YZ or Y-Z.</text>
</comment>
<comment type="PTM">
    <text evidence="2">C-terminally processed by CTPA; processing is essential to allow assembly of the oxygen-evolving complex and thus photosynthetic growth.</text>
</comment>
<comment type="miscellaneous">
    <text evidence="2">2 of the reaction center chlorophylls (ChlD1 and ChlD2) are entirely coordinated by water.</text>
</comment>
<comment type="miscellaneous">
    <text evidence="2">Herbicides such as atrazine, BNT, diuron or ioxynil bind in the Q(B) binding site and block subsequent electron transfer.</text>
</comment>
<comment type="similarity">
    <text evidence="2">Belongs to the reaction center PufL/M/PsbA/D family.</text>
</comment>
<feature type="initiator methionine" description="Removed" evidence="1">
    <location>
        <position position="1"/>
    </location>
</feature>
<feature type="chain" id="PRO_0000340024" description="Photosystem II protein D1" evidence="2">
    <location>
        <begin position="2"/>
        <end position="344"/>
    </location>
</feature>
<feature type="propeptide" id="PRO_0000340025" evidence="2">
    <location>
        <begin position="345"/>
        <end position="353"/>
    </location>
</feature>
<feature type="transmembrane region" description="Helical" evidence="2">
    <location>
        <begin position="29"/>
        <end position="46"/>
    </location>
</feature>
<feature type="transmembrane region" description="Helical" evidence="2">
    <location>
        <begin position="118"/>
        <end position="133"/>
    </location>
</feature>
<feature type="transmembrane region" description="Helical" evidence="2">
    <location>
        <begin position="142"/>
        <end position="156"/>
    </location>
</feature>
<feature type="transmembrane region" description="Helical" evidence="2">
    <location>
        <begin position="197"/>
        <end position="218"/>
    </location>
</feature>
<feature type="transmembrane region" description="Helical" evidence="2">
    <location>
        <begin position="274"/>
        <end position="288"/>
    </location>
</feature>
<feature type="binding site" description="axial binding residue" evidence="2">
    <location>
        <position position="118"/>
    </location>
    <ligand>
        <name>chlorophyll a</name>
        <dbReference type="ChEBI" id="CHEBI:58416"/>
        <label>ChlzD1</label>
    </ligand>
    <ligandPart>
        <name>Mg</name>
        <dbReference type="ChEBI" id="CHEBI:25107"/>
    </ligandPart>
</feature>
<feature type="binding site" evidence="2">
    <location>
        <position position="126"/>
    </location>
    <ligand>
        <name>pheophytin a</name>
        <dbReference type="ChEBI" id="CHEBI:136840"/>
        <label>D1</label>
    </ligand>
</feature>
<feature type="binding site" evidence="2">
    <location>
        <position position="170"/>
    </location>
    <ligand>
        <name>[CaMn4O5] cluster</name>
        <dbReference type="ChEBI" id="CHEBI:189552"/>
    </ligand>
</feature>
<feature type="binding site" evidence="2">
    <location>
        <position position="189"/>
    </location>
    <ligand>
        <name>[CaMn4O5] cluster</name>
        <dbReference type="ChEBI" id="CHEBI:189552"/>
    </ligand>
</feature>
<feature type="binding site" description="axial binding residue" evidence="2">
    <location>
        <position position="198"/>
    </location>
    <ligand>
        <name>chlorophyll a</name>
        <dbReference type="ChEBI" id="CHEBI:58416"/>
        <label>PD1</label>
    </ligand>
    <ligandPart>
        <name>Mg</name>
        <dbReference type="ChEBI" id="CHEBI:25107"/>
    </ligandPart>
</feature>
<feature type="binding site" evidence="2">
    <location>
        <position position="215"/>
    </location>
    <ligand>
        <name>a quinone</name>
        <dbReference type="ChEBI" id="CHEBI:132124"/>
        <label>B</label>
    </ligand>
</feature>
<feature type="binding site" evidence="2">
    <location>
        <position position="215"/>
    </location>
    <ligand>
        <name>Fe cation</name>
        <dbReference type="ChEBI" id="CHEBI:24875"/>
        <note>ligand shared with heterodimeric partner</note>
    </ligand>
</feature>
<feature type="binding site" evidence="2">
    <location>
        <begin position="264"/>
        <end position="265"/>
    </location>
    <ligand>
        <name>a quinone</name>
        <dbReference type="ChEBI" id="CHEBI:132124"/>
        <label>B</label>
    </ligand>
</feature>
<feature type="binding site" evidence="2">
    <location>
        <position position="272"/>
    </location>
    <ligand>
        <name>Fe cation</name>
        <dbReference type="ChEBI" id="CHEBI:24875"/>
        <note>ligand shared with heterodimeric partner</note>
    </ligand>
</feature>
<feature type="binding site" evidence="2">
    <location>
        <position position="332"/>
    </location>
    <ligand>
        <name>[CaMn4O5] cluster</name>
        <dbReference type="ChEBI" id="CHEBI:189552"/>
    </ligand>
</feature>
<feature type="binding site" evidence="2">
    <location>
        <position position="333"/>
    </location>
    <ligand>
        <name>[CaMn4O5] cluster</name>
        <dbReference type="ChEBI" id="CHEBI:189552"/>
    </ligand>
</feature>
<feature type="binding site" evidence="2">
    <location>
        <position position="342"/>
    </location>
    <ligand>
        <name>[CaMn4O5] cluster</name>
        <dbReference type="ChEBI" id="CHEBI:189552"/>
    </ligand>
</feature>
<feature type="binding site" evidence="2">
    <location>
        <position position="344"/>
    </location>
    <ligand>
        <name>[CaMn4O5] cluster</name>
        <dbReference type="ChEBI" id="CHEBI:189552"/>
    </ligand>
</feature>
<feature type="site" description="Tyrosine radical intermediate" evidence="2">
    <location>
        <position position="161"/>
    </location>
</feature>
<feature type="site" description="Stabilizes free radical intermediate" evidence="2">
    <location>
        <position position="190"/>
    </location>
</feature>
<feature type="site" description="Cleavage; by CTPA" evidence="2">
    <location>
        <begin position="344"/>
        <end position="345"/>
    </location>
</feature>
<feature type="modified residue" description="N-acetylthreonine" evidence="1 2">
    <location>
        <position position="2"/>
    </location>
</feature>
<feature type="modified residue" description="Phosphothreonine" evidence="1 2">
    <location>
        <position position="2"/>
    </location>
</feature>
<reference key="1">
    <citation type="submission" date="2007-03" db="EMBL/GenBank/DDBJ databases">
        <title>Sequencing analysis of Nasturtium officinale chloroplast DNA.</title>
        <authorList>
            <person name="Hosouchi T."/>
            <person name="Tsuruoka H."/>
            <person name="Kotani H."/>
        </authorList>
    </citation>
    <scope>NUCLEOTIDE SEQUENCE [LARGE SCALE GENOMIC DNA]</scope>
</reference>